<accession>B1VXZ6</accession>
<dbReference type="EC" id="2.7.7.8" evidence="1"/>
<dbReference type="EMBL" id="AP009493">
    <property type="protein sequence ID" value="BAG18612.1"/>
    <property type="molecule type" value="Genomic_DNA"/>
</dbReference>
<dbReference type="RefSeq" id="WP_003965854.1">
    <property type="nucleotide sequence ID" value="NC_010572.1"/>
</dbReference>
<dbReference type="SMR" id="B1VXZ6"/>
<dbReference type="KEGG" id="sgr:SGR_1783"/>
<dbReference type="eggNOG" id="COG1185">
    <property type="taxonomic scope" value="Bacteria"/>
</dbReference>
<dbReference type="HOGENOM" id="CLU_004217_2_2_11"/>
<dbReference type="Proteomes" id="UP000001685">
    <property type="component" value="Chromosome"/>
</dbReference>
<dbReference type="GO" id="GO:0005829">
    <property type="term" value="C:cytosol"/>
    <property type="evidence" value="ECO:0007669"/>
    <property type="project" value="TreeGrafter"/>
</dbReference>
<dbReference type="GO" id="GO:0000175">
    <property type="term" value="F:3'-5'-RNA exonuclease activity"/>
    <property type="evidence" value="ECO:0007669"/>
    <property type="project" value="TreeGrafter"/>
</dbReference>
<dbReference type="GO" id="GO:0000287">
    <property type="term" value="F:magnesium ion binding"/>
    <property type="evidence" value="ECO:0007669"/>
    <property type="project" value="UniProtKB-UniRule"/>
</dbReference>
<dbReference type="GO" id="GO:0004654">
    <property type="term" value="F:polyribonucleotide nucleotidyltransferase activity"/>
    <property type="evidence" value="ECO:0007669"/>
    <property type="project" value="UniProtKB-UniRule"/>
</dbReference>
<dbReference type="GO" id="GO:0003723">
    <property type="term" value="F:RNA binding"/>
    <property type="evidence" value="ECO:0007669"/>
    <property type="project" value="UniProtKB-UniRule"/>
</dbReference>
<dbReference type="GO" id="GO:0006402">
    <property type="term" value="P:mRNA catabolic process"/>
    <property type="evidence" value="ECO:0007669"/>
    <property type="project" value="UniProtKB-UniRule"/>
</dbReference>
<dbReference type="GO" id="GO:0006396">
    <property type="term" value="P:RNA processing"/>
    <property type="evidence" value="ECO:0007669"/>
    <property type="project" value="InterPro"/>
</dbReference>
<dbReference type="CDD" id="cd02393">
    <property type="entry name" value="KH-I_PNPase"/>
    <property type="match status" value="1"/>
</dbReference>
<dbReference type="CDD" id="cd11364">
    <property type="entry name" value="RNase_PH_PNPase_2"/>
    <property type="match status" value="1"/>
</dbReference>
<dbReference type="CDD" id="cd04472">
    <property type="entry name" value="S1_PNPase"/>
    <property type="match status" value="1"/>
</dbReference>
<dbReference type="FunFam" id="2.40.50.140:FF:000069">
    <property type="entry name" value="Polyribonucleotide nucleotidyltransferase"/>
    <property type="match status" value="1"/>
</dbReference>
<dbReference type="FunFam" id="3.30.1370.10:FF:000001">
    <property type="entry name" value="Polyribonucleotide nucleotidyltransferase"/>
    <property type="match status" value="1"/>
</dbReference>
<dbReference type="FunFam" id="3.30.230.70:FF:000001">
    <property type="entry name" value="Polyribonucleotide nucleotidyltransferase"/>
    <property type="match status" value="1"/>
</dbReference>
<dbReference type="FunFam" id="3.30.230.70:FF:000002">
    <property type="entry name" value="Polyribonucleotide nucleotidyltransferase"/>
    <property type="match status" value="1"/>
</dbReference>
<dbReference type="Gene3D" id="3.30.230.70">
    <property type="entry name" value="GHMP Kinase, N-terminal domain"/>
    <property type="match status" value="2"/>
</dbReference>
<dbReference type="Gene3D" id="3.30.1370.10">
    <property type="entry name" value="K Homology domain, type 1"/>
    <property type="match status" value="1"/>
</dbReference>
<dbReference type="Gene3D" id="2.40.50.140">
    <property type="entry name" value="Nucleic acid-binding proteins"/>
    <property type="match status" value="1"/>
</dbReference>
<dbReference type="HAMAP" id="MF_01595">
    <property type="entry name" value="PNPase"/>
    <property type="match status" value="1"/>
</dbReference>
<dbReference type="InterPro" id="IPR001247">
    <property type="entry name" value="ExoRNase_PH_dom1"/>
</dbReference>
<dbReference type="InterPro" id="IPR036345">
    <property type="entry name" value="ExoRNase_PH_dom2_sf"/>
</dbReference>
<dbReference type="InterPro" id="IPR014069">
    <property type="entry name" value="GPSI/PNP"/>
</dbReference>
<dbReference type="InterPro" id="IPR004087">
    <property type="entry name" value="KH_dom"/>
</dbReference>
<dbReference type="InterPro" id="IPR004088">
    <property type="entry name" value="KH_dom_type_1"/>
</dbReference>
<dbReference type="InterPro" id="IPR036612">
    <property type="entry name" value="KH_dom_type_1_sf"/>
</dbReference>
<dbReference type="InterPro" id="IPR012340">
    <property type="entry name" value="NA-bd_OB-fold"/>
</dbReference>
<dbReference type="InterPro" id="IPR012162">
    <property type="entry name" value="PNPase"/>
</dbReference>
<dbReference type="InterPro" id="IPR027408">
    <property type="entry name" value="PNPase/RNase_PH_dom_sf"/>
</dbReference>
<dbReference type="InterPro" id="IPR015848">
    <property type="entry name" value="PNPase_PH_RNA-bd_bac/org-type"/>
</dbReference>
<dbReference type="InterPro" id="IPR036456">
    <property type="entry name" value="PNPase_PH_RNA-bd_sf"/>
</dbReference>
<dbReference type="InterPro" id="IPR020568">
    <property type="entry name" value="Ribosomal_Su5_D2-typ_SF"/>
</dbReference>
<dbReference type="InterPro" id="IPR003029">
    <property type="entry name" value="S1_domain"/>
</dbReference>
<dbReference type="NCBIfam" id="TIGR03591">
    <property type="entry name" value="polynuc_phos"/>
    <property type="match status" value="1"/>
</dbReference>
<dbReference type="NCBIfam" id="TIGR02696">
    <property type="entry name" value="pppGpp_PNP"/>
    <property type="match status" value="1"/>
</dbReference>
<dbReference type="NCBIfam" id="NF008805">
    <property type="entry name" value="PRK11824.1"/>
    <property type="match status" value="1"/>
</dbReference>
<dbReference type="PANTHER" id="PTHR11252">
    <property type="entry name" value="POLYRIBONUCLEOTIDE NUCLEOTIDYLTRANSFERASE"/>
    <property type="match status" value="1"/>
</dbReference>
<dbReference type="PANTHER" id="PTHR11252:SF0">
    <property type="entry name" value="POLYRIBONUCLEOTIDE NUCLEOTIDYLTRANSFERASE 1, MITOCHONDRIAL"/>
    <property type="match status" value="1"/>
</dbReference>
<dbReference type="Pfam" id="PF00013">
    <property type="entry name" value="KH_1"/>
    <property type="match status" value="1"/>
</dbReference>
<dbReference type="Pfam" id="PF03726">
    <property type="entry name" value="PNPase"/>
    <property type="match status" value="1"/>
</dbReference>
<dbReference type="Pfam" id="PF01138">
    <property type="entry name" value="RNase_PH"/>
    <property type="match status" value="2"/>
</dbReference>
<dbReference type="Pfam" id="PF00575">
    <property type="entry name" value="S1"/>
    <property type="match status" value="1"/>
</dbReference>
<dbReference type="PIRSF" id="PIRSF005499">
    <property type="entry name" value="PNPase"/>
    <property type="match status" value="1"/>
</dbReference>
<dbReference type="SMART" id="SM00322">
    <property type="entry name" value="KH"/>
    <property type="match status" value="1"/>
</dbReference>
<dbReference type="SMART" id="SM00316">
    <property type="entry name" value="S1"/>
    <property type="match status" value="1"/>
</dbReference>
<dbReference type="SUPFAM" id="SSF54791">
    <property type="entry name" value="Eukaryotic type KH-domain (KH-domain type I)"/>
    <property type="match status" value="1"/>
</dbReference>
<dbReference type="SUPFAM" id="SSF46915">
    <property type="entry name" value="Polynucleotide phosphorylase/guanosine pentaphosphate synthase (PNPase/GPSI), domain 3"/>
    <property type="match status" value="1"/>
</dbReference>
<dbReference type="SUPFAM" id="SSF55666">
    <property type="entry name" value="Ribonuclease PH domain 2-like"/>
    <property type="match status" value="2"/>
</dbReference>
<dbReference type="SUPFAM" id="SSF54211">
    <property type="entry name" value="Ribosomal protein S5 domain 2-like"/>
    <property type="match status" value="2"/>
</dbReference>
<dbReference type="PROSITE" id="PS50084">
    <property type="entry name" value="KH_TYPE_1"/>
    <property type="match status" value="1"/>
</dbReference>
<dbReference type="PROSITE" id="PS50126">
    <property type="entry name" value="S1"/>
    <property type="match status" value="1"/>
</dbReference>
<sequence>MENETHYAEAVIDNGTFGTRTIRFETGRLAKQAAGSAVAYLDDDTMVLSATTASKRPKDNLDFFPLTVDVEERQYAAGKIPGSFFRREGRPSEDAILTCRLIDRPLRPSFKKGLRNEIQIVETIMALNPDHLYDVVAINAASCSTILAGLPFSGPIGATRVALIKGQWVAFPTHTELEDAVFDMVVAGRVLEDGDVAIMMVEAEATEKTIQLVKDGAEAPTEEIVAAGLDAAKPFIKALCKAQSDLASKAAKPVGEFPVFLDYQDDVFEALAKAVTSELKQALTIAGKQDREAELDRVKEIAAEKLLPAFEGREKEISAAYRSLTKQLVRERVIKDKVRIDGRGVTDIRTLAAEVEAIPRVHGSALFERGETQILGVTTLNMLRMEQQLDTLSPVTRKRYMHNYNFPPYSVGETGRVGSPKRREIGHGALAERAIVPVLPTREEFPYAIRQVSEALGSNGSTSMGSVCASTMSLLNAGVPLKAAVAGIAMGLISQEIDGKTHYVALTDILGAEDAFGDMDFKVAGTKQFVTALQLDTKLDGIPASVLAAALKQARDARLHILDVMNEAIDVPDEMSPNAPRIITVKIPVDKIGEVIGPKGKMINQIQEDTGADITIEDDGTIYIGAQAGSQAEAARATINAIANPTMPEVGERYLGTVVKTTTFGAFVSLMPGKDGLLHISQIRKLAGGKRVENVEDVLGVGAKVQVEIAEIDSRGKLSLIPVIEGEEDEKKDDTDK</sequence>
<name>PNP_STRGG</name>
<protein>
    <recommendedName>
        <fullName evidence="1">Polyribonucleotide nucleotidyltransferase</fullName>
        <ecNumber evidence="1">2.7.7.8</ecNumber>
    </recommendedName>
    <alternativeName>
        <fullName evidence="1">Polynucleotide phosphorylase</fullName>
        <shortName evidence="1">PNPase</shortName>
    </alternativeName>
</protein>
<comment type="function">
    <text evidence="1">Involved in mRNA degradation. Catalyzes the phosphorolysis of single-stranded polyribonucleotides processively in the 3'- to 5'-direction.</text>
</comment>
<comment type="catalytic activity">
    <reaction evidence="1">
        <text>RNA(n+1) + phosphate = RNA(n) + a ribonucleoside 5'-diphosphate</text>
        <dbReference type="Rhea" id="RHEA:22096"/>
        <dbReference type="Rhea" id="RHEA-COMP:14527"/>
        <dbReference type="Rhea" id="RHEA-COMP:17342"/>
        <dbReference type="ChEBI" id="CHEBI:43474"/>
        <dbReference type="ChEBI" id="CHEBI:57930"/>
        <dbReference type="ChEBI" id="CHEBI:140395"/>
        <dbReference type="EC" id="2.7.7.8"/>
    </reaction>
</comment>
<comment type="cofactor">
    <cofactor evidence="1">
        <name>Mg(2+)</name>
        <dbReference type="ChEBI" id="CHEBI:18420"/>
    </cofactor>
</comment>
<comment type="subcellular location">
    <subcellularLocation>
        <location evidence="1">Cytoplasm</location>
    </subcellularLocation>
</comment>
<comment type="similarity">
    <text evidence="1">Belongs to the polyribonucleotide nucleotidyltransferase family.</text>
</comment>
<feature type="chain" id="PRO_1000192499" description="Polyribonucleotide nucleotidyltransferase">
    <location>
        <begin position="1"/>
        <end position="737"/>
    </location>
</feature>
<feature type="domain" description="KH" evidence="1">
    <location>
        <begin position="580"/>
        <end position="639"/>
    </location>
</feature>
<feature type="domain" description="S1 motif" evidence="1">
    <location>
        <begin position="651"/>
        <end position="723"/>
    </location>
</feature>
<feature type="binding site" evidence="1">
    <location>
        <position position="514"/>
    </location>
    <ligand>
        <name>Mg(2+)</name>
        <dbReference type="ChEBI" id="CHEBI:18420"/>
    </ligand>
</feature>
<feature type="binding site" evidence="1">
    <location>
        <position position="520"/>
    </location>
    <ligand>
        <name>Mg(2+)</name>
        <dbReference type="ChEBI" id="CHEBI:18420"/>
    </ligand>
</feature>
<keyword id="KW-0963">Cytoplasm</keyword>
<keyword id="KW-0460">Magnesium</keyword>
<keyword id="KW-0479">Metal-binding</keyword>
<keyword id="KW-0548">Nucleotidyltransferase</keyword>
<keyword id="KW-0694">RNA-binding</keyword>
<keyword id="KW-0808">Transferase</keyword>
<reference key="1">
    <citation type="journal article" date="2008" name="J. Bacteriol.">
        <title>Genome sequence of the streptomycin-producing microorganism Streptomyces griseus IFO 13350.</title>
        <authorList>
            <person name="Ohnishi Y."/>
            <person name="Ishikawa J."/>
            <person name="Hara H."/>
            <person name="Suzuki H."/>
            <person name="Ikenoya M."/>
            <person name="Ikeda H."/>
            <person name="Yamashita A."/>
            <person name="Hattori M."/>
            <person name="Horinouchi S."/>
        </authorList>
    </citation>
    <scope>NUCLEOTIDE SEQUENCE [LARGE SCALE GENOMIC DNA]</scope>
    <source>
        <strain>JCM 4626 / CBS 651.72 / NBRC 13350 / KCC S-0626 / ISP 5235</strain>
    </source>
</reference>
<organism>
    <name type="scientific">Streptomyces griseus subsp. griseus (strain JCM 4626 / CBS 651.72 / NBRC 13350 / KCC S-0626 / ISP 5235)</name>
    <dbReference type="NCBI Taxonomy" id="455632"/>
    <lineage>
        <taxon>Bacteria</taxon>
        <taxon>Bacillati</taxon>
        <taxon>Actinomycetota</taxon>
        <taxon>Actinomycetes</taxon>
        <taxon>Kitasatosporales</taxon>
        <taxon>Streptomycetaceae</taxon>
        <taxon>Streptomyces</taxon>
    </lineage>
</organism>
<evidence type="ECO:0000255" key="1">
    <source>
        <dbReference type="HAMAP-Rule" id="MF_01595"/>
    </source>
</evidence>
<proteinExistence type="inferred from homology"/>
<gene>
    <name evidence="1" type="primary">pnp</name>
    <name type="ordered locus">SGR_1783</name>
</gene>